<organism>
    <name type="scientific">Shewanella loihica (strain ATCC BAA-1088 / PV-4)</name>
    <dbReference type="NCBI Taxonomy" id="323850"/>
    <lineage>
        <taxon>Bacteria</taxon>
        <taxon>Pseudomonadati</taxon>
        <taxon>Pseudomonadota</taxon>
        <taxon>Gammaproteobacteria</taxon>
        <taxon>Alteromonadales</taxon>
        <taxon>Shewanellaceae</taxon>
        <taxon>Shewanella</taxon>
    </lineage>
</organism>
<comment type="function">
    <text evidence="1">A key translational regulator that binds mRNA to regulate translation initiation and/or mRNA stability. Mediates global changes in gene expression, shifting from rapid growth to stress survival by linking envelope stress, the stringent response and the catabolite repression systems. Usually binds in the 5'-UTR; binding at or near the Shine-Dalgarno sequence prevents ribosome-binding, repressing translation, binding elsewhere in the 5'-UTR can activate translation and/or stabilize the mRNA. Its function is antagonized by small RNA(s).</text>
</comment>
<comment type="subunit">
    <text evidence="1">Homodimer; the beta-strands of each monomer intercalate to form a hydrophobic core, while the alpha-helices form wings that extend away from the core.</text>
</comment>
<comment type="subcellular location">
    <subcellularLocation>
        <location evidence="1">Cytoplasm</location>
    </subcellularLocation>
</comment>
<comment type="similarity">
    <text evidence="1">Belongs to the CsrA/RsmA family.</text>
</comment>
<gene>
    <name evidence="1" type="primary">csrA</name>
    <name type="ordered locus">Shew_1218</name>
</gene>
<keyword id="KW-0010">Activator</keyword>
<keyword id="KW-0963">Cytoplasm</keyword>
<keyword id="KW-1185">Reference proteome</keyword>
<keyword id="KW-0678">Repressor</keyword>
<keyword id="KW-0694">RNA-binding</keyword>
<keyword id="KW-0810">Translation regulation</keyword>
<evidence type="ECO:0000255" key="1">
    <source>
        <dbReference type="HAMAP-Rule" id="MF_00167"/>
    </source>
</evidence>
<reference key="1">
    <citation type="submission" date="2007-03" db="EMBL/GenBank/DDBJ databases">
        <title>Complete sequence of Shewanella loihica PV-4.</title>
        <authorList>
            <consortium name="US DOE Joint Genome Institute"/>
            <person name="Copeland A."/>
            <person name="Lucas S."/>
            <person name="Lapidus A."/>
            <person name="Barry K."/>
            <person name="Detter J.C."/>
            <person name="Glavina del Rio T."/>
            <person name="Hammon N."/>
            <person name="Israni S."/>
            <person name="Dalin E."/>
            <person name="Tice H."/>
            <person name="Pitluck S."/>
            <person name="Chain P."/>
            <person name="Malfatti S."/>
            <person name="Shin M."/>
            <person name="Vergez L."/>
            <person name="Schmutz J."/>
            <person name="Larimer F."/>
            <person name="Land M."/>
            <person name="Hauser L."/>
            <person name="Kyrpides N."/>
            <person name="Mikhailova N."/>
            <person name="Romine M.F."/>
            <person name="Serres G."/>
            <person name="Fredrickson J."/>
            <person name="Tiedje J."/>
            <person name="Richardson P."/>
        </authorList>
    </citation>
    <scope>NUCLEOTIDE SEQUENCE [LARGE SCALE GENOMIC DNA]</scope>
    <source>
        <strain>ATCC BAA-1088 / PV-4</strain>
    </source>
</reference>
<proteinExistence type="inferred from homology"/>
<protein>
    <recommendedName>
        <fullName evidence="1">Translational regulator CsrA</fullName>
    </recommendedName>
    <alternativeName>
        <fullName evidence="1">Carbon storage regulator</fullName>
    </alternativeName>
</protein>
<sequence length="65" mass="7101">MLILTRRVGETLMIGDEVTVTVLGVKGNQVRIGVNAPKEVSVHREEIYQRIQSEKSGSSSEGGNF</sequence>
<feature type="chain" id="PRO_1000023420" description="Translational regulator CsrA">
    <location>
        <begin position="1"/>
        <end position="65"/>
    </location>
</feature>
<name>CSRA_SHELP</name>
<accession>A3QC90</accession>
<dbReference type="EMBL" id="CP000606">
    <property type="protein sequence ID" value="ABO23088.1"/>
    <property type="molecule type" value="Genomic_DNA"/>
</dbReference>
<dbReference type="RefSeq" id="WP_011865020.1">
    <property type="nucleotide sequence ID" value="NC_009092.1"/>
</dbReference>
<dbReference type="BMRB" id="A3QC90"/>
<dbReference type="SMR" id="A3QC90"/>
<dbReference type="STRING" id="323850.Shew_1218"/>
<dbReference type="KEGG" id="slo:Shew_1218"/>
<dbReference type="eggNOG" id="COG1551">
    <property type="taxonomic scope" value="Bacteria"/>
</dbReference>
<dbReference type="HOGENOM" id="CLU_164837_2_2_6"/>
<dbReference type="OrthoDB" id="9809061at2"/>
<dbReference type="Proteomes" id="UP000001558">
    <property type="component" value="Chromosome"/>
</dbReference>
<dbReference type="GO" id="GO:0005829">
    <property type="term" value="C:cytosol"/>
    <property type="evidence" value="ECO:0007669"/>
    <property type="project" value="TreeGrafter"/>
</dbReference>
<dbReference type="GO" id="GO:0048027">
    <property type="term" value="F:mRNA 5'-UTR binding"/>
    <property type="evidence" value="ECO:0007669"/>
    <property type="project" value="UniProtKB-UniRule"/>
</dbReference>
<dbReference type="GO" id="GO:0006402">
    <property type="term" value="P:mRNA catabolic process"/>
    <property type="evidence" value="ECO:0007669"/>
    <property type="project" value="InterPro"/>
</dbReference>
<dbReference type="GO" id="GO:0045947">
    <property type="term" value="P:negative regulation of translational initiation"/>
    <property type="evidence" value="ECO:0007669"/>
    <property type="project" value="UniProtKB-UniRule"/>
</dbReference>
<dbReference type="GO" id="GO:0045948">
    <property type="term" value="P:positive regulation of translational initiation"/>
    <property type="evidence" value="ECO:0007669"/>
    <property type="project" value="UniProtKB-UniRule"/>
</dbReference>
<dbReference type="GO" id="GO:0006109">
    <property type="term" value="P:regulation of carbohydrate metabolic process"/>
    <property type="evidence" value="ECO:0007669"/>
    <property type="project" value="UniProtKB-UniRule"/>
</dbReference>
<dbReference type="FunFam" id="2.60.40.4380:FF:000001">
    <property type="entry name" value="Translational regulator CsrA"/>
    <property type="match status" value="1"/>
</dbReference>
<dbReference type="Gene3D" id="2.60.40.4380">
    <property type="entry name" value="Translational regulator CsrA"/>
    <property type="match status" value="1"/>
</dbReference>
<dbReference type="HAMAP" id="MF_00167">
    <property type="entry name" value="CsrA"/>
    <property type="match status" value="1"/>
</dbReference>
<dbReference type="InterPro" id="IPR003751">
    <property type="entry name" value="CsrA"/>
</dbReference>
<dbReference type="InterPro" id="IPR036107">
    <property type="entry name" value="CsrA_sf"/>
</dbReference>
<dbReference type="NCBIfam" id="TIGR00202">
    <property type="entry name" value="csrA"/>
    <property type="match status" value="1"/>
</dbReference>
<dbReference type="NCBIfam" id="NF002469">
    <property type="entry name" value="PRK01712.1"/>
    <property type="match status" value="1"/>
</dbReference>
<dbReference type="PANTHER" id="PTHR34984">
    <property type="entry name" value="CARBON STORAGE REGULATOR"/>
    <property type="match status" value="1"/>
</dbReference>
<dbReference type="PANTHER" id="PTHR34984:SF1">
    <property type="entry name" value="CARBON STORAGE REGULATOR"/>
    <property type="match status" value="1"/>
</dbReference>
<dbReference type="Pfam" id="PF02599">
    <property type="entry name" value="CsrA"/>
    <property type="match status" value="1"/>
</dbReference>
<dbReference type="SUPFAM" id="SSF117130">
    <property type="entry name" value="CsrA-like"/>
    <property type="match status" value="1"/>
</dbReference>